<proteinExistence type="inferred from homology"/>
<organism>
    <name type="scientific">Eublepharis macularius</name>
    <name type="common">Leopard gecko</name>
    <name type="synonym">Cyrtodactylus macularius</name>
    <dbReference type="NCBI Taxonomy" id="481883"/>
    <lineage>
        <taxon>Eukaryota</taxon>
        <taxon>Metazoa</taxon>
        <taxon>Chordata</taxon>
        <taxon>Craniata</taxon>
        <taxon>Vertebrata</taxon>
        <taxon>Euteleostomi</taxon>
        <taxon>Lepidosauria</taxon>
        <taxon>Squamata</taxon>
        <taxon>Bifurcata</taxon>
        <taxon>Gekkota</taxon>
        <taxon>Eublepharidae</taxon>
        <taxon>Eublepharinae</taxon>
        <taxon>Eublepharis</taxon>
    </lineage>
</organism>
<evidence type="ECO:0000255" key="1">
    <source>
        <dbReference type="PROSITE-ProRule" id="PRU00267"/>
    </source>
</evidence>
<sequence>VKRPMNAFMVWSQNERRKIMDQWPDMHNAEISKRLGRRWQLLQDSEKIPFVKEASVRLKHMADYPDYKYRP</sequence>
<name>LG28_EUBMA</name>
<keyword id="KW-0238">DNA-binding</keyword>
<keyword id="KW-0539">Nucleus</keyword>
<keyword id="KW-1185">Reference proteome</keyword>
<comment type="subcellular location">
    <subcellularLocation>
        <location evidence="1">Nucleus</location>
    </subcellularLocation>
</comment>
<dbReference type="EMBL" id="M86336">
    <property type="protein sequence ID" value="AAA92979.1"/>
    <property type="molecule type" value="Genomic_DNA"/>
</dbReference>
<dbReference type="PIR" id="I50542">
    <property type="entry name" value="I50542"/>
</dbReference>
<dbReference type="SMR" id="P40655"/>
<dbReference type="Proteomes" id="UP001190640">
    <property type="component" value="Unplaced"/>
</dbReference>
<dbReference type="GO" id="GO:0005634">
    <property type="term" value="C:nucleus"/>
    <property type="evidence" value="ECO:0007669"/>
    <property type="project" value="UniProtKB-SubCell"/>
</dbReference>
<dbReference type="GO" id="GO:0001228">
    <property type="term" value="F:DNA-binding transcription activator activity, RNA polymerase II-specific"/>
    <property type="evidence" value="ECO:0007669"/>
    <property type="project" value="TreeGrafter"/>
</dbReference>
<dbReference type="GO" id="GO:0000978">
    <property type="term" value="F:RNA polymerase II cis-regulatory region sequence-specific DNA binding"/>
    <property type="evidence" value="ECO:0007669"/>
    <property type="project" value="TreeGrafter"/>
</dbReference>
<dbReference type="GO" id="GO:0007420">
    <property type="term" value="P:brain development"/>
    <property type="evidence" value="ECO:0007669"/>
    <property type="project" value="TreeGrafter"/>
</dbReference>
<dbReference type="GO" id="GO:0048593">
    <property type="term" value="P:camera-type eye morphogenesis"/>
    <property type="evidence" value="ECO:0007669"/>
    <property type="project" value="TreeGrafter"/>
</dbReference>
<dbReference type="GO" id="GO:0000122">
    <property type="term" value="P:negative regulation of transcription by RNA polymerase II"/>
    <property type="evidence" value="ECO:0007669"/>
    <property type="project" value="TreeGrafter"/>
</dbReference>
<dbReference type="GO" id="GO:0030182">
    <property type="term" value="P:neuron differentiation"/>
    <property type="evidence" value="ECO:0007669"/>
    <property type="project" value="TreeGrafter"/>
</dbReference>
<dbReference type="FunFam" id="1.10.30.10:FF:000007">
    <property type="entry name" value="Transcription factor SOX"/>
    <property type="match status" value="1"/>
</dbReference>
<dbReference type="Gene3D" id="1.10.30.10">
    <property type="entry name" value="High mobility group box domain"/>
    <property type="match status" value="1"/>
</dbReference>
<dbReference type="InterPro" id="IPR009071">
    <property type="entry name" value="HMG_box_dom"/>
</dbReference>
<dbReference type="InterPro" id="IPR036910">
    <property type="entry name" value="HMG_box_dom_sf"/>
</dbReference>
<dbReference type="InterPro" id="IPR050140">
    <property type="entry name" value="SRY-related_HMG-box_TF-like"/>
</dbReference>
<dbReference type="PANTHER" id="PTHR10270">
    <property type="entry name" value="SOX TRANSCRIPTION FACTOR"/>
    <property type="match status" value="1"/>
</dbReference>
<dbReference type="PANTHER" id="PTHR10270:SF221">
    <property type="entry name" value="TRANSCRIPTION FACTOR SOX-12"/>
    <property type="match status" value="1"/>
</dbReference>
<dbReference type="Pfam" id="PF00505">
    <property type="entry name" value="HMG_box"/>
    <property type="match status" value="1"/>
</dbReference>
<dbReference type="SMART" id="SM00398">
    <property type="entry name" value="HMG"/>
    <property type="match status" value="1"/>
</dbReference>
<dbReference type="SUPFAM" id="SSF47095">
    <property type="entry name" value="HMG-box"/>
    <property type="match status" value="1"/>
</dbReference>
<dbReference type="PROSITE" id="PS50118">
    <property type="entry name" value="HMG_BOX_2"/>
    <property type="match status" value="1"/>
</dbReference>
<accession>P40655</accession>
<reference key="1">
    <citation type="journal article" date="1993" name="PCR Methods Appl.">
        <title>PCR amplification of SRY-related gene sequences reveals evolutionary conservation of the SRY-box motif.</title>
        <authorList>
            <person name="Coriat A.M."/>
            <person name="Mueller U."/>
            <person name="Harry J.L."/>
            <person name="Uwanogho D."/>
            <person name="Sharpe P.T."/>
        </authorList>
    </citation>
    <scope>NUCLEOTIDE SEQUENCE [GENOMIC DNA]</scope>
</reference>
<feature type="chain" id="PRO_0000048798" description="SRY-related protein LG28">
    <location>
        <begin position="1" status="less than"/>
        <end position="71" status="greater than"/>
    </location>
</feature>
<feature type="DNA-binding region" description="HMG box" evidence="1">
    <location>
        <begin position="1"/>
        <end position="68"/>
    </location>
</feature>
<feature type="non-terminal residue">
    <location>
        <position position="1"/>
    </location>
</feature>
<feature type="non-terminal residue">
    <location>
        <position position="71"/>
    </location>
</feature>
<protein>
    <recommendedName>
        <fullName>SRY-related protein LG28</fullName>
    </recommendedName>
</protein>